<comment type="function">
    <text evidence="1">Involved in iron-sulfur cluster biogenesis. Binds a 4Fe-4S cluster, can transfer this cluster to apoproteins, and thereby intervenes in the maturation of Fe/S proteins. Could also act as a scaffold/chaperone for damaged Fe/S proteins.</text>
</comment>
<comment type="cofactor">
    <cofactor evidence="1">
        <name>[4Fe-4S] cluster</name>
        <dbReference type="ChEBI" id="CHEBI:49883"/>
    </cofactor>
    <text evidence="1">Binds 1 [4Fe-4S] cluster per subunit. The cluster is presumably bound at the interface of two monomers.</text>
</comment>
<comment type="subunit">
    <text evidence="1">Homodimer.</text>
</comment>
<comment type="similarity">
    <text evidence="1">Belongs to the NfuA family.</text>
</comment>
<protein>
    <recommendedName>
        <fullName evidence="1">Fe/S biogenesis protein NfuA</fullName>
    </recommendedName>
</protein>
<proteinExistence type="inferred from homology"/>
<accession>Q88KB2</accession>
<dbReference type="EMBL" id="AE015451">
    <property type="protein sequence ID" value="AAN67991.1"/>
    <property type="molecule type" value="Genomic_DNA"/>
</dbReference>
<dbReference type="RefSeq" id="NP_744527.1">
    <property type="nucleotide sequence ID" value="NC_002947.4"/>
</dbReference>
<dbReference type="RefSeq" id="WP_003250416.1">
    <property type="nucleotide sequence ID" value="NZ_CP169744.1"/>
</dbReference>
<dbReference type="SMR" id="Q88KB2"/>
<dbReference type="STRING" id="160488.PP_2378"/>
<dbReference type="PaxDb" id="160488-PP_2378"/>
<dbReference type="GeneID" id="97167477"/>
<dbReference type="KEGG" id="ppu:PP_2378"/>
<dbReference type="PATRIC" id="fig|160488.4.peg.2520"/>
<dbReference type="eggNOG" id="COG0316">
    <property type="taxonomic scope" value="Bacteria"/>
</dbReference>
<dbReference type="eggNOG" id="COG0694">
    <property type="taxonomic scope" value="Bacteria"/>
</dbReference>
<dbReference type="HOGENOM" id="CLU_094569_0_0_6"/>
<dbReference type="OrthoDB" id="9785450at2"/>
<dbReference type="PhylomeDB" id="Q88KB2"/>
<dbReference type="BioCyc" id="PPUT160488:G1G01-2541-MONOMER"/>
<dbReference type="Proteomes" id="UP000000556">
    <property type="component" value="Chromosome"/>
</dbReference>
<dbReference type="GO" id="GO:0051539">
    <property type="term" value="F:4 iron, 4 sulfur cluster binding"/>
    <property type="evidence" value="ECO:0007669"/>
    <property type="project" value="UniProtKB-UniRule"/>
</dbReference>
<dbReference type="GO" id="GO:0005506">
    <property type="term" value="F:iron ion binding"/>
    <property type="evidence" value="ECO:0007669"/>
    <property type="project" value="InterPro"/>
</dbReference>
<dbReference type="GO" id="GO:0016226">
    <property type="term" value="P:iron-sulfur cluster assembly"/>
    <property type="evidence" value="ECO:0007669"/>
    <property type="project" value="UniProtKB-UniRule"/>
</dbReference>
<dbReference type="GO" id="GO:0051604">
    <property type="term" value="P:protein maturation"/>
    <property type="evidence" value="ECO:0007669"/>
    <property type="project" value="UniProtKB-UniRule"/>
</dbReference>
<dbReference type="Gene3D" id="3.30.300.130">
    <property type="entry name" value="Fe-S cluster assembly (FSCA)"/>
    <property type="match status" value="1"/>
</dbReference>
<dbReference type="Gene3D" id="2.60.300.12">
    <property type="entry name" value="HesB-like domain"/>
    <property type="match status" value="1"/>
</dbReference>
<dbReference type="HAMAP" id="MF_01637">
    <property type="entry name" value="Fe_S_biogen_NfuA"/>
    <property type="match status" value="1"/>
</dbReference>
<dbReference type="InterPro" id="IPR017726">
    <property type="entry name" value="Fe/S_biogenesis_protein_NfuA"/>
</dbReference>
<dbReference type="InterPro" id="IPR000361">
    <property type="entry name" value="FeS_biogenesis"/>
</dbReference>
<dbReference type="InterPro" id="IPR034904">
    <property type="entry name" value="FSCA_dom_sf"/>
</dbReference>
<dbReference type="InterPro" id="IPR035903">
    <property type="entry name" value="HesB-like_dom_sf"/>
</dbReference>
<dbReference type="InterPro" id="IPR001075">
    <property type="entry name" value="NIF_FeS_clus_asmbl_NifU_C"/>
</dbReference>
<dbReference type="NCBIfam" id="TIGR03341">
    <property type="entry name" value="YhgI_GntY"/>
    <property type="match status" value="1"/>
</dbReference>
<dbReference type="PANTHER" id="PTHR11178:SF51">
    <property type="entry name" value="FE_S BIOGENESIS PROTEIN NFUA"/>
    <property type="match status" value="1"/>
</dbReference>
<dbReference type="PANTHER" id="PTHR11178">
    <property type="entry name" value="IRON-SULFUR CLUSTER SCAFFOLD PROTEIN NFU-RELATED"/>
    <property type="match status" value="1"/>
</dbReference>
<dbReference type="Pfam" id="PF01521">
    <property type="entry name" value="Fe-S_biosyn"/>
    <property type="match status" value="1"/>
</dbReference>
<dbReference type="Pfam" id="PF01106">
    <property type="entry name" value="NifU"/>
    <property type="match status" value="1"/>
</dbReference>
<dbReference type="SUPFAM" id="SSF117916">
    <property type="entry name" value="Fe-S cluster assembly (FSCA) domain-like"/>
    <property type="match status" value="1"/>
</dbReference>
<dbReference type="SUPFAM" id="SSF89360">
    <property type="entry name" value="HesB-like domain"/>
    <property type="match status" value="1"/>
</dbReference>
<evidence type="ECO:0000255" key="1">
    <source>
        <dbReference type="HAMAP-Rule" id="MF_01637"/>
    </source>
</evidence>
<feature type="chain" id="PRO_0000209482" description="Fe/S biogenesis protein NfuA">
    <location>
        <begin position="1"/>
        <end position="194"/>
    </location>
</feature>
<feature type="binding site" evidence="1">
    <location>
        <position position="152"/>
    </location>
    <ligand>
        <name>[4Fe-4S] cluster</name>
        <dbReference type="ChEBI" id="CHEBI:49883"/>
    </ligand>
</feature>
<feature type="binding site" evidence="1">
    <location>
        <position position="155"/>
    </location>
    <ligand>
        <name>[4Fe-4S] cluster</name>
        <dbReference type="ChEBI" id="CHEBI:49883"/>
    </ligand>
</feature>
<reference key="1">
    <citation type="journal article" date="2002" name="Environ. Microbiol.">
        <title>Complete genome sequence and comparative analysis of the metabolically versatile Pseudomonas putida KT2440.</title>
        <authorList>
            <person name="Nelson K.E."/>
            <person name="Weinel C."/>
            <person name="Paulsen I.T."/>
            <person name="Dodson R.J."/>
            <person name="Hilbert H."/>
            <person name="Martins dos Santos V.A.P."/>
            <person name="Fouts D.E."/>
            <person name="Gill S.R."/>
            <person name="Pop M."/>
            <person name="Holmes M."/>
            <person name="Brinkac L.M."/>
            <person name="Beanan M.J."/>
            <person name="DeBoy R.T."/>
            <person name="Daugherty S.C."/>
            <person name="Kolonay J.F."/>
            <person name="Madupu R."/>
            <person name="Nelson W.C."/>
            <person name="White O."/>
            <person name="Peterson J.D."/>
            <person name="Khouri H.M."/>
            <person name="Hance I."/>
            <person name="Chris Lee P."/>
            <person name="Holtzapple E.K."/>
            <person name="Scanlan D."/>
            <person name="Tran K."/>
            <person name="Moazzez A."/>
            <person name="Utterback T.R."/>
            <person name="Rizzo M."/>
            <person name="Lee K."/>
            <person name="Kosack D."/>
            <person name="Moestl D."/>
            <person name="Wedler H."/>
            <person name="Lauber J."/>
            <person name="Stjepandic D."/>
            <person name="Hoheisel J."/>
            <person name="Straetz M."/>
            <person name="Heim S."/>
            <person name="Kiewitz C."/>
            <person name="Eisen J.A."/>
            <person name="Timmis K.N."/>
            <person name="Duesterhoeft A."/>
            <person name="Tuemmler B."/>
            <person name="Fraser C.M."/>
        </authorList>
    </citation>
    <scope>NUCLEOTIDE SEQUENCE [LARGE SCALE GENOMIC DNA]</scope>
    <source>
        <strain>ATCC 47054 / DSM 6125 / CFBP 8728 / NCIMB 11950 / KT2440</strain>
    </source>
</reference>
<sequence length="194" mass="20956">MSAITITDAAHDYLADLLSKQNTPGIGIRIFITQPGTQYAETCIAYCKPGEEKPDDTAVGLKSFTAYLDAVSVPFLEDALVDYATDRMGGQLTIKAPNAKVPMVNEDSPINERINYYLQTEINPGLASHGGQVSLVDVVDDGIAVLQFGGGCQGCGQADVTLKEGIERTLLERIPELKGVRDVTDHSQKENAYY</sequence>
<name>NFUA_PSEPK</name>
<keyword id="KW-0004">4Fe-4S</keyword>
<keyword id="KW-0408">Iron</keyword>
<keyword id="KW-0411">Iron-sulfur</keyword>
<keyword id="KW-0479">Metal-binding</keyword>
<keyword id="KW-1185">Reference proteome</keyword>
<organism>
    <name type="scientific">Pseudomonas putida (strain ATCC 47054 / DSM 6125 / CFBP 8728 / NCIMB 11950 / KT2440)</name>
    <dbReference type="NCBI Taxonomy" id="160488"/>
    <lineage>
        <taxon>Bacteria</taxon>
        <taxon>Pseudomonadati</taxon>
        <taxon>Pseudomonadota</taxon>
        <taxon>Gammaproteobacteria</taxon>
        <taxon>Pseudomonadales</taxon>
        <taxon>Pseudomonadaceae</taxon>
        <taxon>Pseudomonas</taxon>
    </lineage>
</organism>
<gene>
    <name evidence="1" type="primary">nfuA</name>
    <name type="ordered locus">PP_2378</name>
</gene>